<organism>
    <name type="scientific">Geobacillus stearothermophilus</name>
    <name type="common">Bacillus stearothermophilus</name>
    <dbReference type="NCBI Taxonomy" id="1422"/>
    <lineage>
        <taxon>Bacteria</taxon>
        <taxon>Bacillati</taxon>
        <taxon>Bacillota</taxon>
        <taxon>Bacilli</taxon>
        <taxon>Bacillales</taxon>
        <taxon>Anoxybacillaceae</taxon>
        <taxon>Geobacillus</taxon>
    </lineage>
</organism>
<sequence length="149" mass="16311">MKVIFLKDVKGKGKKGEIKNVADGYANNFLFKQGLAIEATPANLKALEAQKQKEQRQAAEELANAKKLKEQLEKLTVTIPAKAGEGGRLFGSITSKQIAESLQAQHGLKLDKRKIELADAIRALGYTNVPVKLHPEVTATLKVHVTEQK</sequence>
<proteinExistence type="evidence at protein level"/>
<comment type="function">
    <text>Binds to the 23S rRNA.</text>
</comment>
<comment type="similarity">
    <text evidence="1">Belongs to the bacterial ribosomal protein bL9 family.</text>
</comment>
<feature type="chain" id="PRO_0000176617" description="Large ribosomal subunit protein bL9">
    <location>
        <begin position="1"/>
        <end position="149"/>
    </location>
</feature>
<feature type="sequence conflict" description="In Ref. 3; AA sequence." evidence="1" ref="3">
    <location>
        <position position="28"/>
    </location>
</feature>
<feature type="sequence conflict" description="In Ref. 3; AA sequence." evidence="1" ref="3">
    <location>
        <position position="61"/>
    </location>
</feature>
<feature type="strand" evidence="3">
    <location>
        <begin position="2"/>
        <end position="7"/>
    </location>
</feature>
<feature type="turn" evidence="3">
    <location>
        <begin position="10"/>
        <end position="12"/>
    </location>
</feature>
<feature type="helix" evidence="2">
    <location>
        <begin position="13"/>
        <end position="15"/>
    </location>
</feature>
<feature type="strand" evidence="3">
    <location>
        <begin position="18"/>
        <end position="20"/>
    </location>
</feature>
<feature type="helix" evidence="3">
    <location>
        <begin position="23"/>
        <end position="28"/>
    </location>
</feature>
<feature type="turn" evidence="3">
    <location>
        <begin position="29"/>
        <end position="34"/>
    </location>
</feature>
<feature type="strand" evidence="3">
    <location>
        <begin position="35"/>
        <end position="38"/>
    </location>
</feature>
<feature type="helix" evidence="3">
    <location>
        <begin position="41"/>
        <end position="51"/>
    </location>
</feature>
<feature type="strand" evidence="2">
    <location>
        <begin position="77"/>
        <end position="81"/>
    </location>
</feature>
<feature type="helix" evidence="2">
    <location>
        <begin position="85"/>
        <end position="87"/>
    </location>
</feature>
<feature type="strand" evidence="2">
    <location>
        <begin position="88"/>
        <end position="93"/>
    </location>
</feature>
<feature type="helix" evidence="2">
    <location>
        <begin position="95"/>
        <end position="106"/>
    </location>
</feature>
<feature type="helix" evidence="2">
    <location>
        <begin position="112"/>
        <end position="114"/>
    </location>
</feature>
<feature type="strand" evidence="2">
    <location>
        <begin position="121"/>
        <end position="134"/>
    </location>
</feature>
<feature type="strand" evidence="2">
    <location>
        <begin position="137"/>
        <end position="147"/>
    </location>
</feature>
<reference key="1">
    <citation type="journal article" date="1991" name="J. Biol. Chem.">
        <title>Cloning, sequencing, and overexpression of genes for ribosomal proteins from Bacillus stearothermophilus.</title>
        <authorList>
            <person name="Ramakrishnan V."/>
            <person name="Gerchman S.E."/>
        </authorList>
    </citation>
    <scope>NUCLEOTIDE SEQUENCE [GENOMIC DNA]</scope>
</reference>
<reference key="2">
    <citation type="journal article" date="1991" name="FEBS Lett.">
        <title>Cloning, overexpression, purification and crystallisation of ribosomal protein L9 from Bacillus stearothermophilus.</title>
        <authorList>
            <person name="Vorgias C.E."/>
            <person name="Kingswell A.J."/>
            <person name="Dauter Z."/>
            <person name="Wilson K.S."/>
        </authorList>
    </citation>
    <scope>NUCLEOTIDE SEQUENCE [GENOMIC DNA]</scope>
</reference>
<reference key="3">
    <citation type="journal article" date="1980" name="FEBS Lett.">
        <title>The primary structure of protein BLF17 isolated from the large subunit of the Bacillus stearothermophilus ribosome.</title>
        <authorList>
            <person name="Kimura M."/>
            <person name="Dijk J."/>
            <person name="Heiland I."/>
        </authorList>
    </citation>
    <scope>PROTEIN SEQUENCE</scope>
</reference>
<reference key="4">
    <citation type="journal article" date="1994" name="EMBO J.">
        <title>Crystal structure of prokaryotic ribosomal protein L9: a bi-lobed RNA-binding protein.</title>
        <authorList>
            <person name="Hoffman D.W."/>
            <person name="Davies C."/>
            <person name="Gerchman S.E."/>
            <person name="Kycia J.H."/>
            <person name="Porter S.J."/>
            <person name="White S.W."/>
            <person name="Ramakrishnan V."/>
        </authorList>
    </citation>
    <scope>X-RAY CRYSTALLOGRAPHY (2.8 ANGSTROMS)</scope>
</reference>
<name>RL9_GEOSE</name>
<evidence type="ECO:0000305" key="1"/>
<evidence type="ECO:0007829" key="2">
    <source>
        <dbReference type="PDB" id="1DIV"/>
    </source>
</evidence>
<evidence type="ECO:0007829" key="3">
    <source>
        <dbReference type="PDB" id="2HBA"/>
    </source>
</evidence>
<keyword id="KW-0002">3D-structure</keyword>
<keyword id="KW-0903">Direct protein sequencing</keyword>
<keyword id="KW-0687">Ribonucleoprotein</keyword>
<keyword id="KW-0689">Ribosomal protein</keyword>
<keyword id="KW-0694">RNA-binding</keyword>
<keyword id="KW-0699">rRNA-binding</keyword>
<protein>
    <recommendedName>
        <fullName evidence="1">Large ribosomal subunit protein bL9</fullName>
    </recommendedName>
    <alternativeName>
        <fullName>50S ribosomal protein L9</fullName>
    </alternativeName>
    <alternativeName>
        <fullName>BL17</fullName>
    </alternativeName>
</protein>
<dbReference type="EMBL" id="M57623">
    <property type="protein sequence ID" value="AAA22701.1"/>
    <property type="status" value="ALT_SEQ"/>
    <property type="molecule type" value="Genomic_DNA"/>
</dbReference>
<dbReference type="EMBL" id="X62002">
    <property type="protein sequence ID" value="CAA43972.1"/>
    <property type="molecule type" value="Genomic_DNA"/>
</dbReference>
<dbReference type="PIR" id="S16974">
    <property type="entry name" value="R5BS7F"/>
</dbReference>
<dbReference type="RefSeq" id="WP_033008865.1">
    <property type="nucleotide sequence ID" value="NZ_RCTK01000012.1"/>
</dbReference>
<dbReference type="PDB" id="1CQU">
    <property type="method" value="NMR"/>
    <property type="chains" value="A=1-56"/>
</dbReference>
<dbReference type="PDB" id="1DIV">
    <property type="method" value="X-ray"/>
    <property type="resolution" value="2.60 A"/>
    <property type="chains" value="A=1-149"/>
</dbReference>
<dbReference type="PDB" id="2HBA">
    <property type="method" value="X-ray"/>
    <property type="resolution" value="1.25 A"/>
    <property type="chains" value="A/B=1-52"/>
</dbReference>
<dbReference type="PDB" id="2HBB">
    <property type="method" value="X-ray"/>
    <property type="resolution" value="1.90 A"/>
    <property type="chains" value="A=1-51"/>
</dbReference>
<dbReference type="PDB" id="2HVF">
    <property type="method" value="X-ray"/>
    <property type="resolution" value="1.57 A"/>
    <property type="chains" value="A=1-52"/>
</dbReference>
<dbReference type="PDB" id="4V42">
    <property type="method" value="X-ray"/>
    <property type="resolution" value="5.50 A"/>
    <property type="chains" value="BK=1-149"/>
</dbReference>
<dbReference type="PDB" id="4V4R">
    <property type="method" value="X-ray"/>
    <property type="resolution" value="5.90 A"/>
    <property type="chains" value="BI=1-149"/>
</dbReference>
<dbReference type="PDB" id="4V4S">
    <property type="method" value="X-ray"/>
    <property type="resolution" value="6.76 A"/>
    <property type="chains" value="BI=1-149"/>
</dbReference>
<dbReference type="PDB" id="4V4T">
    <property type="method" value="X-ray"/>
    <property type="resolution" value="6.46 A"/>
    <property type="chains" value="I=1-149"/>
</dbReference>
<dbReference type="PDBsum" id="1CQU"/>
<dbReference type="PDBsum" id="1DIV"/>
<dbReference type="PDBsum" id="2HBA"/>
<dbReference type="PDBsum" id="2HBB"/>
<dbReference type="PDBsum" id="2HVF"/>
<dbReference type="PDBsum" id="4V42"/>
<dbReference type="PDBsum" id="4V4R"/>
<dbReference type="PDBsum" id="4V4S"/>
<dbReference type="PDBsum" id="4V4T"/>
<dbReference type="BMRB" id="P02417"/>
<dbReference type="SMR" id="P02417"/>
<dbReference type="IntAct" id="P02417">
    <property type="interactions" value="1"/>
</dbReference>
<dbReference type="GeneID" id="89612831"/>
<dbReference type="OrthoDB" id="9788336at2"/>
<dbReference type="EvolutionaryTrace" id="P02417"/>
<dbReference type="GO" id="GO:1990904">
    <property type="term" value="C:ribonucleoprotein complex"/>
    <property type="evidence" value="ECO:0007669"/>
    <property type="project" value="UniProtKB-KW"/>
</dbReference>
<dbReference type="GO" id="GO:0005840">
    <property type="term" value="C:ribosome"/>
    <property type="evidence" value="ECO:0007669"/>
    <property type="project" value="UniProtKB-KW"/>
</dbReference>
<dbReference type="GO" id="GO:0019843">
    <property type="term" value="F:rRNA binding"/>
    <property type="evidence" value="ECO:0007669"/>
    <property type="project" value="UniProtKB-UniRule"/>
</dbReference>
<dbReference type="GO" id="GO:0003735">
    <property type="term" value="F:structural constituent of ribosome"/>
    <property type="evidence" value="ECO:0007669"/>
    <property type="project" value="InterPro"/>
</dbReference>
<dbReference type="GO" id="GO:0006412">
    <property type="term" value="P:translation"/>
    <property type="evidence" value="ECO:0007669"/>
    <property type="project" value="UniProtKB-UniRule"/>
</dbReference>
<dbReference type="FunFam" id="3.10.430.100:FF:000002">
    <property type="entry name" value="50S ribosomal protein L9"/>
    <property type="match status" value="1"/>
</dbReference>
<dbReference type="FunFam" id="3.40.5.10:FF:000002">
    <property type="entry name" value="50S ribosomal protein L9"/>
    <property type="match status" value="1"/>
</dbReference>
<dbReference type="Gene3D" id="3.10.430.100">
    <property type="entry name" value="Ribosomal protein L9, C-terminal domain"/>
    <property type="match status" value="1"/>
</dbReference>
<dbReference type="Gene3D" id="3.40.5.10">
    <property type="entry name" value="Ribosomal protein L9, N-terminal domain"/>
    <property type="match status" value="1"/>
</dbReference>
<dbReference type="HAMAP" id="MF_00503">
    <property type="entry name" value="Ribosomal_bL9"/>
    <property type="match status" value="1"/>
</dbReference>
<dbReference type="InterPro" id="IPR000244">
    <property type="entry name" value="Ribosomal_bL9"/>
</dbReference>
<dbReference type="InterPro" id="IPR009027">
    <property type="entry name" value="Ribosomal_bL9/RNase_H1_N"/>
</dbReference>
<dbReference type="InterPro" id="IPR020594">
    <property type="entry name" value="Ribosomal_bL9_bac/chp"/>
</dbReference>
<dbReference type="InterPro" id="IPR020069">
    <property type="entry name" value="Ribosomal_bL9_C"/>
</dbReference>
<dbReference type="InterPro" id="IPR036791">
    <property type="entry name" value="Ribosomal_bL9_C_sf"/>
</dbReference>
<dbReference type="InterPro" id="IPR020070">
    <property type="entry name" value="Ribosomal_bL9_N"/>
</dbReference>
<dbReference type="InterPro" id="IPR036935">
    <property type="entry name" value="Ribosomal_bL9_N_sf"/>
</dbReference>
<dbReference type="NCBIfam" id="TIGR00158">
    <property type="entry name" value="L9"/>
    <property type="match status" value="1"/>
</dbReference>
<dbReference type="PANTHER" id="PTHR21368">
    <property type="entry name" value="50S RIBOSOMAL PROTEIN L9"/>
    <property type="match status" value="1"/>
</dbReference>
<dbReference type="Pfam" id="PF03948">
    <property type="entry name" value="Ribosomal_L9_C"/>
    <property type="match status" value="1"/>
</dbReference>
<dbReference type="Pfam" id="PF01281">
    <property type="entry name" value="Ribosomal_L9_N"/>
    <property type="match status" value="1"/>
</dbReference>
<dbReference type="SUPFAM" id="SSF55658">
    <property type="entry name" value="L9 N-domain-like"/>
    <property type="match status" value="1"/>
</dbReference>
<dbReference type="SUPFAM" id="SSF55653">
    <property type="entry name" value="Ribosomal protein L9 C-domain"/>
    <property type="match status" value="1"/>
</dbReference>
<dbReference type="PROSITE" id="PS00651">
    <property type="entry name" value="RIBOSOMAL_L9"/>
    <property type="match status" value="1"/>
</dbReference>
<gene>
    <name type="primary">rplI</name>
</gene>
<accession>P02417</accession>